<feature type="initiator methionine" description="Removed" evidence="12 28 29">
    <location>
        <position position="1"/>
    </location>
</feature>
<feature type="chain" id="PRO_0000075877" description="PDZ and LIM domain protein 5">
    <location>
        <begin position="2"/>
        <end position="596"/>
    </location>
</feature>
<feature type="domain" description="PDZ" evidence="4">
    <location>
        <begin position="2"/>
        <end position="85"/>
    </location>
</feature>
<feature type="domain" description="LIM zinc-binding 1" evidence="3">
    <location>
        <begin position="418"/>
        <end position="477"/>
    </location>
</feature>
<feature type="domain" description="LIM zinc-binding 2" evidence="3">
    <location>
        <begin position="477"/>
        <end position="536"/>
    </location>
</feature>
<feature type="domain" description="LIM zinc-binding 3" evidence="3">
    <location>
        <begin position="536"/>
        <end position="596"/>
    </location>
</feature>
<feature type="region of interest" description="Disordered" evidence="5">
    <location>
        <begin position="121"/>
        <end position="165"/>
    </location>
</feature>
<feature type="region of interest" description="Disordered" evidence="5">
    <location>
        <begin position="196"/>
        <end position="240"/>
    </location>
</feature>
<feature type="region of interest" description="Disordered" evidence="5">
    <location>
        <begin position="255"/>
        <end position="340"/>
    </location>
</feature>
<feature type="region of interest" description="Disordered" evidence="5">
    <location>
        <begin position="354"/>
        <end position="381"/>
    </location>
</feature>
<feature type="compositionally biased region" description="Polar residues" evidence="5">
    <location>
        <begin position="134"/>
        <end position="143"/>
    </location>
</feature>
<feature type="compositionally biased region" description="Low complexity" evidence="5">
    <location>
        <begin position="144"/>
        <end position="165"/>
    </location>
</feature>
<feature type="compositionally biased region" description="Polar residues" evidence="5">
    <location>
        <begin position="205"/>
        <end position="219"/>
    </location>
</feature>
<feature type="compositionally biased region" description="Polar residues" evidence="5">
    <location>
        <begin position="226"/>
        <end position="237"/>
    </location>
</feature>
<feature type="compositionally biased region" description="Basic and acidic residues" evidence="5">
    <location>
        <begin position="258"/>
        <end position="273"/>
    </location>
</feature>
<feature type="compositionally biased region" description="Basic and acidic residues" evidence="5">
    <location>
        <begin position="293"/>
        <end position="304"/>
    </location>
</feature>
<feature type="compositionally biased region" description="Polar residues" evidence="5">
    <location>
        <begin position="305"/>
        <end position="335"/>
    </location>
</feature>
<feature type="compositionally biased region" description="Polar residues" evidence="5">
    <location>
        <begin position="361"/>
        <end position="381"/>
    </location>
</feature>
<feature type="modified residue" description="N-acetylserine" evidence="12 28 29">
    <location>
        <position position="2"/>
    </location>
</feature>
<feature type="modified residue" description="Phosphoserine" evidence="1">
    <location>
        <position position="2"/>
    </location>
</feature>
<feature type="modified residue" description="N6-acetyllysine; alternate" evidence="2">
    <location>
        <position position="89"/>
    </location>
</feature>
<feature type="modified residue" description="N6-succinyllysine; alternate" evidence="2">
    <location>
        <position position="89"/>
    </location>
</feature>
<feature type="modified residue" description="Phosphoserine" evidence="24 25 30">
    <location>
        <position position="111"/>
    </location>
</feature>
<feature type="modified residue" description="Phosphoserine" evidence="30">
    <location>
        <position position="134"/>
    </location>
</feature>
<feature type="modified residue" description="Phosphoserine" evidence="24 25 30">
    <location>
        <position position="137"/>
    </location>
</feature>
<feature type="modified residue" description="Phosphoserine" evidence="2">
    <location>
        <position position="228"/>
    </location>
</feature>
<feature type="modified residue" description="Phosphoserine" evidence="30">
    <location>
        <position position="260"/>
    </location>
</feature>
<feature type="modified residue" description="Phosphoserine" evidence="23 24 25 27 30">
    <location>
        <position position="309"/>
    </location>
</feature>
<feature type="modified residue" description="Phosphoserine" evidence="23 24 25 30 31">
    <location>
        <position position="313"/>
    </location>
</feature>
<feature type="modified residue" description="Phosphoserine" evidence="1">
    <location>
        <position position="322"/>
    </location>
</feature>
<feature type="modified residue" description="N6-acetyllysine" evidence="2">
    <location>
        <position position="350"/>
    </location>
</feature>
<feature type="modified residue" description="Phosphoserine" evidence="30 31">
    <location>
        <position position="360"/>
    </location>
</feature>
<feature type="modified residue" description="Phosphoserine" evidence="30">
    <location>
        <position position="362"/>
    </location>
</feature>
<feature type="cross-link" description="Glycyl lysine isopeptide (Lys-Gly) (interchain with G-Cter in SUMO2); alternate" evidence="32">
    <location>
        <position position="89"/>
    </location>
</feature>
<feature type="splice variant" id="VSP_045098" description="In isoform 5." evidence="17">
    <original>LKDGGKAAQANVRIGDVVLSIDGINAQGMTHLEAQNKIKGCTGSLNMTLQRASAAPKPEPVPVQKGEPKEVVKPVPITSPAVSKVTSTNNMAYNKAPRPFGSVS</original>
    <variation>AGVQWRNLGSPQPPSPEFKRFSCLSLPSSWDYRHVPPRLANFVFLVETKFPYVGQAGLELPTSGDLPTSASQSAKITGVSHRAWPTLFYTLLFFATIYPEIILY</variation>
    <location>
        <begin position="33"/>
        <end position="136"/>
    </location>
</feature>
<feature type="splice variant" id="VSP_039075" description="In isoform 2, isoform 4, isoform 6 and isoform 7." evidence="19 20">
    <location>
        <begin position="98"/>
        <end position="206"/>
    </location>
</feature>
<feature type="splice variant" id="VSP_039206" description="In isoform 3." evidence="16 18">
    <original>GEPKEVVKPVPITSPAVSKV</original>
    <variation>KTQVTNNPGTVKIPPKRPPR</variation>
    <location>
        <begin position="98"/>
        <end position="117"/>
    </location>
</feature>
<feature type="splice variant" id="VSP_039207" description="In isoform 3." evidence="16 18">
    <location>
        <begin position="118"/>
        <end position="240"/>
    </location>
</feature>
<feature type="splice variant" id="VSP_045099" description="In isoform 5." evidence="17">
    <location>
        <begin position="137"/>
        <end position="596"/>
    </location>
</feature>
<feature type="splice variant" id="VSP_039076" description="In isoform 2, isoform 6 and isoform 7." evidence="19">
    <original>G</original>
    <variation>GKIPPKR</variation>
    <location>
        <position position="237"/>
    </location>
</feature>
<feature type="splice variant" id="VSP_039077" description="In isoform 2 and isoform 3." evidence="16 18 19">
    <original>NNSQEPSPQLASSVASTRSMPESLDSPTSGR</original>
    <variation>KEKIPLHVFSPKYTKLRDWHHEVSARALNVQ</variation>
    <location>
        <begin position="307"/>
        <end position="337"/>
    </location>
</feature>
<feature type="splice variant" id="VSP_053796" description="In isoform 6." evidence="21">
    <original>N</original>
    <variation>KFDSALEDLPKSGPHPPATPQVLTIGSQVATLSKVATTYSSLSSSTGNVEDSFEGFRNFSTFSSPARYSAAVLSSAAATVSAVIATKTRLYTPERYHSLLDALCISPVSKPLAFSYLQSSRKSTGSIHVKKTS</variation>
    <location>
        <position position="307"/>
    </location>
</feature>
<feature type="splice variant" id="VSP_039078" description="In isoform 2 and isoform 3." evidence="16 18 19">
    <location>
        <begin position="338"/>
        <end position="596"/>
    </location>
</feature>
<feature type="splice variant" id="VSP_053797" description="In isoform 7." evidence="21">
    <location>
        <begin position="587"/>
        <end position="596"/>
    </location>
</feature>
<feature type="sequence variant" id="VAR_023779" description="In dbSNP:rs2452600." evidence="7">
    <original>S</original>
    <variation>F</variation>
    <location>
        <position position="136"/>
    </location>
</feature>
<feature type="sequence variant" id="VAR_046662" description="In dbSNP:rs1064238." evidence="6 8">
    <original>S</original>
    <variation>L</variation>
    <location>
        <position position="319"/>
    </location>
</feature>
<feature type="sequence variant" id="VAR_046663" description="In dbSNP:rs966845." evidence="6 7 8 9 13 14">
    <original>A</original>
    <variation>T</variation>
    <location>
        <position position="345"/>
    </location>
</feature>
<feature type="sequence variant" id="VAR_046664" description="In dbSNP:rs7690296." evidence="9 13 14">
    <original>T</original>
    <variation>A</variation>
    <location>
        <position position="381"/>
    </location>
</feature>
<feature type="sequence variant" id="VAR_046665" description="In dbSNP:rs7690464.">
    <original>P</original>
    <variation>S</variation>
    <location>
        <position position="388"/>
    </location>
</feature>
<feature type="sequence variant" id="VAR_046666" description="In dbSNP:rs13107595." evidence="6 7 8 9 13 14 26">
    <original>S</original>
    <variation>N</variation>
    <location>
        <position position="492"/>
    </location>
</feature>
<feature type="strand" evidence="34">
    <location>
        <begin position="3"/>
        <end position="12"/>
    </location>
</feature>
<feature type="strand" evidence="34">
    <location>
        <begin position="16"/>
        <end position="21"/>
    </location>
</feature>
<feature type="helix" evidence="34">
    <location>
        <begin position="22"/>
        <end position="24"/>
    </location>
</feature>
<feature type="strand" evidence="34">
    <location>
        <begin position="26"/>
        <end position="33"/>
    </location>
</feature>
<feature type="helix" evidence="34">
    <location>
        <begin position="38"/>
        <end position="41"/>
    </location>
</feature>
<feature type="strand" evidence="34">
    <location>
        <begin position="49"/>
        <end position="53"/>
    </location>
</feature>
<feature type="helix" evidence="34">
    <location>
        <begin position="63"/>
        <end position="71"/>
    </location>
</feature>
<feature type="strand" evidence="34">
    <location>
        <begin position="75"/>
        <end position="82"/>
    </location>
</feature>
<feature type="strand" evidence="33">
    <location>
        <begin position="409"/>
        <end position="411"/>
    </location>
</feature>
<feature type="turn" evidence="33">
    <location>
        <begin position="413"/>
        <end position="415"/>
    </location>
</feature>
<feature type="strand" evidence="33">
    <location>
        <begin position="419"/>
        <end position="423"/>
    </location>
</feature>
<feature type="strand" evidence="33">
    <location>
        <begin position="431"/>
        <end position="434"/>
    </location>
</feature>
<feature type="strand" evidence="33">
    <location>
        <begin position="437"/>
        <end position="439"/>
    </location>
</feature>
<feature type="turn" evidence="33">
    <location>
        <begin position="441"/>
        <end position="443"/>
    </location>
</feature>
<feature type="strand" evidence="33">
    <location>
        <begin position="447"/>
        <end position="449"/>
    </location>
</feature>
<feature type="strand" evidence="33">
    <location>
        <begin position="454"/>
        <end position="456"/>
    </location>
</feature>
<feature type="strand" evidence="33">
    <location>
        <begin position="458"/>
        <end position="463"/>
    </location>
</feature>
<feature type="helix" evidence="33">
    <location>
        <begin position="468"/>
        <end position="474"/>
    </location>
</feature>
<feature type="sequence conflict" description="In Ref. 6; AL833438." evidence="21" ref="6">
    <original>D</original>
    <variation>G</variation>
    <location sequence="Q96HC4-2">
        <position position="221"/>
    </location>
</feature>
<accession>Q96HC4</accession>
<accession>A8K6F9</accession>
<accession>D6RB78</accession>
<accession>E9PBF5</accession>
<accession>O60705</accession>
<accession>Q56VN4</accession>
<accession>Q5UW38</accession>
<accession>Q8WVK0</accession>
<evidence type="ECO:0000250" key="1">
    <source>
        <dbReference type="UniProtKB" id="Q62920"/>
    </source>
</evidence>
<evidence type="ECO:0000250" key="2">
    <source>
        <dbReference type="UniProtKB" id="Q8CI51"/>
    </source>
</evidence>
<evidence type="ECO:0000255" key="3">
    <source>
        <dbReference type="PROSITE-ProRule" id="PRU00125"/>
    </source>
</evidence>
<evidence type="ECO:0000255" key="4">
    <source>
        <dbReference type="PROSITE-ProRule" id="PRU00143"/>
    </source>
</evidence>
<evidence type="ECO:0000256" key="5">
    <source>
        <dbReference type="SAM" id="MobiDB-lite"/>
    </source>
</evidence>
<evidence type="ECO:0000269" key="6">
    <source>
    </source>
</evidence>
<evidence type="ECO:0000269" key="7">
    <source>
    </source>
</evidence>
<evidence type="ECO:0000269" key="8">
    <source>
    </source>
</evidence>
<evidence type="ECO:0000269" key="9">
    <source>
    </source>
</evidence>
<evidence type="ECO:0000269" key="10">
    <source>
    </source>
</evidence>
<evidence type="ECO:0000269" key="11">
    <source>
    </source>
</evidence>
<evidence type="ECO:0000269" key="12">
    <source ref="11"/>
</evidence>
<evidence type="ECO:0000269" key="13">
    <source ref="4"/>
</evidence>
<evidence type="ECO:0000269" key="14">
    <source ref="9"/>
</evidence>
<evidence type="ECO:0000303" key="15">
    <source>
    </source>
</evidence>
<evidence type="ECO:0000303" key="16">
    <source>
    </source>
</evidence>
<evidence type="ECO:0000303" key="17">
    <source>
    </source>
</evidence>
<evidence type="ECO:0000303" key="18">
    <source>
    </source>
</evidence>
<evidence type="ECO:0000303" key="19">
    <source>
    </source>
</evidence>
<evidence type="ECO:0000303" key="20">
    <source ref="6"/>
</evidence>
<evidence type="ECO:0000305" key="21"/>
<evidence type="ECO:0000312" key="22">
    <source>
        <dbReference type="HGNC" id="HGNC:17468"/>
    </source>
</evidence>
<evidence type="ECO:0007744" key="23">
    <source>
    </source>
</evidence>
<evidence type="ECO:0007744" key="24">
    <source>
    </source>
</evidence>
<evidence type="ECO:0007744" key="25">
    <source>
    </source>
</evidence>
<evidence type="ECO:0007744" key="26">
    <source>
    </source>
</evidence>
<evidence type="ECO:0007744" key="27">
    <source>
    </source>
</evidence>
<evidence type="ECO:0007744" key="28">
    <source>
    </source>
</evidence>
<evidence type="ECO:0007744" key="29">
    <source>
    </source>
</evidence>
<evidence type="ECO:0007744" key="30">
    <source>
    </source>
</evidence>
<evidence type="ECO:0007744" key="31">
    <source>
    </source>
</evidence>
<evidence type="ECO:0007744" key="32">
    <source>
    </source>
</evidence>
<evidence type="ECO:0007829" key="33">
    <source>
        <dbReference type="PDB" id="2DAR"/>
    </source>
</evidence>
<evidence type="ECO:0007829" key="34">
    <source>
        <dbReference type="PDB" id="2UZC"/>
    </source>
</evidence>
<organism>
    <name type="scientific">Homo sapiens</name>
    <name type="common">Human</name>
    <dbReference type="NCBI Taxonomy" id="9606"/>
    <lineage>
        <taxon>Eukaryota</taxon>
        <taxon>Metazoa</taxon>
        <taxon>Chordata</taxon>
        <taxon>Craniata</taxon>
        <taxon>Vertebrata</taxon>
        <taxon>Euteleostomi</taxon>
        <taxon>Mammalia</taxon>
        <taxon>Eutheria</taxon>
        <taxon>Euarchontoglires</taxon>
        <taxon>Primates</taxon>
        <taxon>Haplorrhini</taxon>
        <taxon>Catarrhini</taxon>
        <taxon>Hominidae</taxon>
        <taxon>Homo</taxon>
    </lineage>
</organism>
<keyword id="KW-0002">3D-structure</keyword>
<keyword id="KW-0007">Acetylation</keyword>
<keyword id="KW-0025">Alternative splicing</keyword>
<keyword id="KW-0966">Cell projection</keyword>
<keyword id="KW-0963">Cytoplasm</keyword>
<keyword id="KW-0903">Direct protein sequencing</keyword>
<keyword id="KW-1017">Isopeptide bond</keyword>
<keyword id="KW-0440">LIM domain</keyword>
<keyword id="KW-0479">Metal-binding</keyword>
<keyword id="KW-0597">Phosphoprotein</keyword>
<keyword id="KW-1267">Proteomics identification</keyword>
<keyword id="KW-1185">Reference proteome</keyword>
<keyword id="KW-0677">Repeat</keyword>
<keyword id="KW-0770">Synapse</keyword>
<keyword id="KW-0832">Ubl conjugation</keyword>
<keyword id="KW-0862">Zinc</keyword>
<name>PDLI5_HUMAN</name>
<protein>
    <recommendedName>
        <fullName evidence="21">PDZ and LIM domain protein 5</fullName>
    </recommendedName>
    <alternativeName>
        <fullName evidence="15">Enigma homolog</fullName>
    </alternativeName>
    <alternativeName>
        <fullName evidence="15">Enigma-like PDZ and LIM domains protein</fullName>
    </alternativeName>
</protein>
<proteinExistence type="evidence at protein level"/>
<reference key="1">
    <citation type="journal article" date="1999" name="J. Hum. Genet.">
        <title>Isolation, tissue expression, and chromosomal assignment of a human LIM protein gene, showing homology to rat enigma homologue (ENH).</title>
        <authorList>
            <person name="Ueki N."/>
            <person name="Seki N."/>
            <person name="Yano K."/>
            <person name="Masuho Y."/>
            <person name="Saito T."/>
            <person name="Muramatsu M."/>
        </authorList>
    </citation>
    <scope>NUCLEOTIDE SEQUENCE [MRNA] (ISOFORM 1)</scope>
    <scope>TISSUE SPECIFICITY</scope>
    <scope>VARIANTS LEU-319; THR-345 AND ASN-492</scope>
</reference>
<reference key="2">
    <citation type="journal article" date="2004" name="DNA Seq.">
        <title>Cloning and identification of a novel human gene PDLIM5, a homolog of AD-associated neuronal thread protein (AD7c-NTP).</title>
        <authorList>
            <person name="Wu M."/>
            <person name="Li Y."/>
            <person name="Ji C."/>
            <person name="Xu J."/>
            <person name="Zheng H."/>
            <person name="Zou X."/>
            <person name="Gu S."/>
            <person name="Lou Y."/>
            <person name="Xie Y."/>
            <person name="Mao Y."/>
        </authorList>
    </citation>
    <scope>NUCLEOTIDE SEQUENCE [MRNA] (ISOFORM 5)</scope>
</reference>
<reference key="3">
    <citation type="journal article" date="2004" name="Oncogene">
        <title>Suppression subtractive hybridization and expression profiling identifies a unique set of genes overexpressed in non-small-cell lung cancer.</title>
        <authorList>
            <person name="Petroziello J."/>
            <person name="Yamane A."/>
            <person name="Westendorf L."/>
            <person name="Thompson M."/>
            <person name="McDonagh C."/>
            <person name="Cerveny C."/>
            <person name="Law C.-L."/>
            <person name="Wahl A."/>
            <person name="Carter P."/>
        </authorList>
    </citation>
    <scope>NUCLEOTIDE SEQUENCE [MRNA] (ISOFORM 1)</scope>
    <scope>VARIANTS LEU-319; THR-345 AND ASN-492</scope>
</reference>
<reference key="4">
    <citation type="submission" date="2003-05" db="EMBL/GenBank/DDBJ databases">
        <title>Cloning of human full-length CDSs in BD Creator(TM) system donor vector.</title>
        <authorList>
            <person name="Kalnine N."/>
            <person name="Chen X."/>
            <person name="Rolfs A."/>
            <person name="Halleck A."/>
            <person name="Hines L."/>
            <person name="Eisenstein S."/>
            <person name="Koundinya M."/>
            <person name="Raphael J."/>
            <person name="Moreira D."/>
            <person name="Kelley T."/>
            <person name="LaBaer J."/>
            <person name="Lin Y."/>
            <person name="Phelan M."/>
            <person name="Farmer A."/>
        </authorList>
    </citation>
    <scope>NUCLEOTIDE SEQUENCE [LARGE SCALE MRNA] (ISOFORM 1)</scope>
    <scope>VARIANTS THR-345; ALA-381 AND ASN-492</scope>
</reference>
<reference key="5">
    <citation type="journal article" date="2004" name="Nat. Genet.">
        <title>Complete sequencing and characterization of 21,243 full-length human cDNAs.</title>
        <authorList>
            <person name="Ota T."/>
            <person name="Suzuki Y."/>
            <person name="Nishikawa T."/>
            <person name="Otsuki T."/>
            <person name="Sugiyama T."/>
            <person name="Irie R."/>
            <person name="Wakamatsu A."/>
            <person name="Hayashi K."/>
            <person name="Sato H."/>
            <person name="Nagai K."/>
            <person name="Kimura K."/>
            <person name="Makita H."/>
            <person name="Sekine M."/>
            <person name="Obayashi M."/>
            <person name="Nishi T."/>
            <person name="Shibahara T."/>
            <person name="Tanaka T."/>
            <person name="Ishii S."/>
            <person name="Yamamoto J."/>
            <person name="Saito K."/>
            <person name="Kawai Y."/>
            <person name="Isono Y."/>
            <person name="Nakamura Y."/>
            <person name="Nagahari K."/>
            <person name="Murakami K."/>
            <person name="Yasuda T."/>
            <person name="Iwayanagi T."/>
            <person name="Wagatsuma M."/>
            <person name="Shiratori A."/>
            <person name="Sudo H."/>
            <person name="Hosoiri T."/>
            <person name="Kaku Y."/>
            <person name="Kodaira H."/>
            <person name="Kondo H."/>
            <person name="Sugawara M."/>
            <person name="Takahashi M."/>
            <person name="Kanda K."/>
            <person name="Yokoi T."/>
            <person name="Furuya T."/>
            <person name="Kikkawa E."/>
            <person name="Omura Y."/>
            <person name="Abe K."/>
            <person name="Kamihara K."/>
            <person name="Katsuta N."/>
            <person name="Sato K."/>
            <person name="Tanikawa M."/>
            <person name="Yamazaki M."/>
            <person name="Ninomiya K."/>
            <person name="Ishibashi T."/>
            <person name="Yamashita H."/>
            <person name="Murakawa K."/>
            <person name="Fujimori K."/>
            <person name="Tanai H."/>
            <person name="Kimata M."/>
            <person name="Watanabe M."/>
            <person name="Hiraoka S."/>
            <person name="Chiba Y."/>
            <person name="Ishida S."/>
            <person name="Ono Y."/>
            <person name="Takiguchi S."/>
            <person name="Watanabe S."/>
            <person name="Yosida M."/>
            <person name="Hotuta T."/>
            <person name="Kusano J."/>
            <person name="Kanehori K."/>
            <person name="Takahashi-Fujii A."/>
            <person name="Hara H."/>
            <person name="Tanase T.-O."/>
            <person name="Nomura Y."/>
            <person name="Togiya S."/>
            <person name="Komai F."/>
            <person name="Hara R."/>
            <person name="Takeuchi K."/>
            <person name="Arita M."/>
            <person name="Imose N."/>
            <person name="Musashino K."/>
            <person name="Yuuki H."/>
            <person name="Oshima A."/>
            <person name="Sasaki N."/>
            <person name="Aotsuka S."/>
            <person name="Yoshikawa Y."/>
            <person name="Matsunawa H."/>
            <person name="Ichihara T."/>
            <person name="Shiohata N."/>
            <person name="Sano S."/>
            <person name="Moriya S."/>
            <person name="Momiyama H."/>
            <person name="Satoh N."/>
            <person name="Takami S."/>
            <person name="Terashima Y."/>
            <person name="Suzuki O."/>
            <person name="Nakagawa S."/>
            <person name="Senoh A."/>
            <person name="Mizoguchi H."/>
            <person name="Goto Y."/>
            <person name="Shimizu F."/>
            <person name="Wakebe H."/>
            <person name="Hishigaki H."/>
            <person name="Watanabe T."/>
            <person name="Sugiyama A."/>
            <person name="Takemoto M."/>
            <person name="Kawakami B."/>
            <person name="Yamazaki M."/>
            <person name="Watanabe K."/>
            <person name="Kumagai A."/>
            <person name="Itakura S."/>
            <person name="Fukuzumi Y."/>
            <person name="Fujimori Y."/>
            <person name="Komiyama M."/>
            <person name="Tashiro H."/>
            <person name="Tanigami A."/>
            <person name="Fujiwara T."/>
            <person name="Ono T."/>
            <person name="Yamada K."/>
            <person name="Fujii Y."/>
            <person name="Ozaki K."/>
            <person name="Hirao M."/>
            <person name="Ohmori Y."/>
            <person name="Kawabata A."/>
            <person name="Hikiji T."/>
            <person name="Kobatake N."/>
            <person name="Inagaki H."/>
            <person name="Ikema Y."/>
            <person name="Okamoto S."/>
            <person name="Okitani R."/>
            <person name="Kawakami T."/>
            <person name="Noguchi S."/>
            <person name="Itoh T."/>
            <person name="Shigeta K."/>
            <person name="Senba T."/>
            <person name="Matsumura K."/>
            <person name="Nakajima Y."/>
            <person name="Mizuno T."/>
            <person name="Morinaga M."/>
            <person name="Sasaki M."/>
            <person name="Togashi T."/>
            <person name="Oyama M."/>
            <person name="Hata H."/>
            <person name="Watanabe M."/>
            <person name="Komatsu T."/>
            <person name="Mizushima-Sugano J."/>
            <person name="Satoh T."/>
            <person name="Shirai Y."/>
            <person name="Takahashi Y."/>
            <person name="Nakagawa K."/>
            <person name="Okumura K."/>
            <person name="Nagase T."/>
            <person name="Nomura N."/>
            <person name="Kikuchi H."/>
            <person name="Masuho Y."/>
            <person name="Yamashita R."/>
            <person name="Nakai K."/>
            <person name="Yada T."/>
            <person name="Nakamura Y."/>
            <person name="Ohara O."/>
            <person name="Isogai T."/>
            <person name="Sugano S."/>
        </authorList>
    </citation>
    <scope>NUCLEOTIDE SEQUENCE [LARGE SCALE MRNA] (ISOFORMS 1 AND 3)</scope>
    <scope>VARIANTS PHE-136; THR-345 AND ASN-492</scope>
    <source>
        <tissue>Placenta</tissue>
    </source>
</reference>
<reference key="6">
    <citation type="submission" date="2004-07" db="EMBL/GenBank/DDBJ databases">
        <title>Full-length cDNA libraries and normalization.</title>
        <authorList>
            <person name="Li W.B."/>
            <person name="Gruber C."/>
            <person name="Jessee J."/>
            <person name="Polayes D."/>
        </authorList>
    </citation>
    <scope>NUCLEOTIDE SEQUENCE [LARGE SCALE MRNA] (ISOFORM 4)</scope>
    <source>
        <tissue>Placenta</tissue>
    </source>
</reference>
<reference key="7">
    <citation type="journal article" date="2007" name="BMC Genomics">
        <title>The full-ORF clone resource of the German cDNA consortium.</title>
        <authorList>
            <person name="Bechtel S."/>
            <person name="Rosenfelder H."/>
            <person name="Duda A."/>
            <person name="Schmidt C.P."/>
            <person name="Ernst U."/>
            <person name="Wellenreuther R."/>
            <person name="Mehrle A."/>
            <person name="Schuster C."/>
            <person name="Bahr A."/>
            <person name="Bloecker H."/>
            <person name="Heubner D."/>
            <person name="Hoerlein A."/>
            <person name="Michel G."/>
            <person name="Wedler H."/>
            <person name="Koehrer K."/>
            <person name="Ottenwaelder B."/>
            <person name="Poustka A."/>
            <person name="Wiemann S."/>
            <person name="Schupp I."/>
        </authorList>
    </citation>
    <scope>NUCLEOTIDE SEQUENCE [LARGE SCALE MRNA] (ISOFORM 2)</scope>
    <source>
        <tissue>Heart</tissue>
    </source>
</reference>
<reference key="8">
    <citation type="journal article" date="2005" name="Nature">
        <title>Generation and annotation of the DNA sequences of human chromosomes 2 and 4.</title>
        <authorList>
            <person name="Hillier L.W."/>
            <person name="Graves T.A."/>
            <person name="Fulton R.S."/>
            <person name="Fulton L.A."/>
            <person name="Pepin K.H."/>
            <person name="Minx P."/>
            <person name="Wagner-McPherson C."/>
            <person name="Layman D."/>
            <person name="Wylie K."/>
            <person name="Sekhon M."/>
            <person name="Becker M.C."/>
            <person name="Fewell G.A."/>
            <person name="Delehaunty K.D."/>
            <person name="Miner T.L."/>
            <person name="Nash W.E."/>
            <person name="Kremitzki C."/>
            <person name="Oddy L."/>
            <person name="Du H."/>
            <person name="Sun H."/>
            <person name="Bradshaw-Cordum H."/>
            <person name="Ali J."/>
            <person name="Carter J."/>
            <person name="Cordes M."/>
            <person name="Harris A."/>
            <person name="Isak A."/>
            <person name="van Brunt A."/>
            <person name="Nguyen C."/>
            <person name="Du F."/>
            <person name="Courtney L."/>
            <person name="Kalicki J."/>
            <person name="Ozersky P."/>
            <person name="Abbott S."/>
            <person name="Armstrong J."/>
            <person name="Belter E.A."/>
            <person name="Caruso L."/>
            <person name="Cedroni M."/>
            <person name="Cotton M."/>
            <person name="Davidson T."/>
            <person name="Desai A."/>
            <person name="Elliott G."/>
            <person name="Erb T."/>
            <person name="Fronick C."/>
            <person name="Gaige T."/>
            <person name="Haakenson W."/>
            <person name="Haglund K."/>
            <person name="Holmes A."/>
            <person name="Harkins R."/>
            <person name="Kim K."/>
            <person name="Kruchowski S.S."/>
            <person name="Strong C.M."/>
            <person name="Grewal N."/>
            <person name="Goyea E."/>
            <person name="Hou S."/>
            <person name="Levy A."/>
            <person name="Martinka S."/>
            <person name="Mead K."/>
            <person name="McLellan M.D."/>
            <person name="Meyer R."/>
            <person name="Randall-Maher J."/>
            <person name="Tomlinson C."/>
            <person name="Dauphin-Kohlberg S."/>
            <person name="Kozlowicz-Reilly A."/>
            <person name="Shah N."/>
            <person name="Swearengen-Shahid S."/>
            <person name="Snider J."/>
            <person name="Strong J.T."/>
            <person name="Thompson J."/>
            <person name="Yoakum M."/>
            <person name="Leonard S."/>
            <person name="Pearman C."/>
            <person name="Trani L."/>
            <person name="Radionenko M."/>
            <person name="Waligorski J.E."/>
            <person name="Wang C."/>
            <person name="Rock S.M."/>
            <person name="Tin-Wollam A.-M."/>
            <person name="Maupin R."/>
            <person name="Latreille P."/>
            <person name="Wendl M.C."/>
            <person name="Yang S.-P."/>
            <person name="Pohl C."/>
            <person name="Wallis J.W."/>
            <person name="Spieth J."/>
            <person name="Bieri T.A."/>
            <person name="Berkowicz N."/>
            <person name="Nelson J.O."/>
            <person name="Osborne J."/>
            <person name="Ding L."/>
            <person name="Meyer R."/>
            <person name="Sabo A."/>
            <person name="Shotland Y."/>
            <person name="Sinha P."/>
            <person name="Wohldmann P.E."/>
            <person name="Cook L.L."/>
            <person name="Hickenbotham M.T."/>
            <person name="Eldred J."/>
            <person name="Williams D."/>
            <person name="Jones T.A."/>
            <person name="She X."/>
            <person name="Ciccarelli F.D."/>
            <person name="Izaurralde E."/>
            <person name="Taylor J."/>
            <person name="Schmutz J."/>
            <person name="Myers R.M."/>
            <person name="Cox D.R."/>
            <person name="Huang X."/>
            <person name="McPherson J.D."/>
            <person name="Mardis E.R."/>
            <person name="Clifton S.W."/>
            <person name="Warren W.C."/>
            <person name="Chinwalla A.T."/>
            <person name="Eddy S.R."/>
            <person name="Marra M.A."/>
            <person name="Ovcharenko I."/>
            <person name="Furey T.S."/>
            <person name="Miller W."/>
            <person name="Eichler E.E."/>
            <person name="Bork P."/>
            <person name="Suyama M."/>
            <person name="Torrents D."/>
            <person name="Waterston R.H."/>
            <person name="Wilson R.K."/>
        </authorList>
    </citation>
    <scope>NUCLEOTIDE SEQUENCE [LARGE SCALE GENOMIC DNA]</scope>
</reference>
<reference key="9">
    <citation type="submission" date="2005-07" db="EMBL/GenBank/DDBJ databases">
        <authorList>
            <person name="Mural R.J."/>
            <person name="Istrail S."/>
            <person name="Sutton G.G."/>
            <person name="Florea L."/>
            <person name="Halpern A.L."/>
            <person name="Mobarry C.M."/>
            <person name="Lippert R."/>
            <person name="Walenz B."/>
            <person name="Shatkay H."/>
            <person name="Dew I."/>
            <person name="Miller J.R."/>
            <person name="Flanigan M.J."/>
            <person name="Edwards N.J."/>
            <person name="Bolanos R."/>
            <person name="Fasulo D."/>
            <person name="Halldorsson B.V."/>
            <person name="Hannenhalli S."/>
            <person name="Turner R."/>
            <person name="Yooseph S."/>
            <person name="Lu F."/>
            <person name="Nusskern D.R."/>
            <person name="Shue B.C."/>
            <person name="Zheng X.H."/>
            <person name="Zhong F."/>
            <person name="Delcher A.L."/>
            <person name="Huson D.H."/>
            <person name="Kravitz S.A."/>
            <person name="Mouchard L."/>
            <person name="Reinert K."/>
            <person name="Remington K.A."/>
            <person name="Clark A.G."/>
            <person name="Waterman M.S."/>
            <person name="Eichler E.E."/>
            <person name="Adams M.D."/>
            <person name="Hunkapiller M.W."/>
            <person name="Myers E.W."/>
            <person name="Venter J.C."/>
        </authorList>
    </citation>
    <scope>NUCLEOTIDE SEQUENCE [LARGE SCALE GENOMIC DNA]</scope>
    <scope>VARIANTS THR-345; ALA-381 AND ASN-492</scope>
</reference>
<reference key="10">
    <citation type="journal article" date="2004" name="Genome Res.">
        <title>The status, quality, and expansion of the NIH full-length cDNA project: the Mammalian Gene Collection (MGC).</title>
        <authorList>
            <consortium name="The MGC Project Team"/>
        </authorList>
    </citation>
    <scope>NUCLEOTIDE SEQUENCE [LARGE SCALE MRNA] (ISOFORMS 1 AND 3)</scope>
    <scope>VARIANTS THR-345; ALA-381 AND ASN-492</scope>
    <source>
        <tissue>Skin</tissue>
    </source>
</reference>
<reference key="11">
    <citation type="submission" date="2005-11" db="UniProtKB">
        <authorList>
            <person name="Bienvenut W.V."/>
            <person name="Claeys D."/>
        </authorList>
    </citation>
    <scope>PROTEIN SEQUENCE OF 2-17 AND 84-97 (ISOFORMS 1/2)</scope>
    <scope>CLEAVAGE OF INITIATOR METHIONINE</scope>
    <scope>ACETYLATION AT SER-2</scope>
    <scope>IDENTIFICATION BY MASS SPECTROMETRY</scope>
    <source>
        <tissue>Platelet</tissue>
    </source>
</reference>
<reference key="12">
    <citation type="journal article" date="2005" name="Mol. Psychiatry">
        <title>Gene expression and association analyses of LIM (PDLIM5) in bipolar disorder and schizophrenia.</title>
        <authorList>
            <person name="Kato T."/>
            <person name="Iwayama Y."/>
            <person name="Kakiuchi C."/>
            <person name="Iwamoto K."/>
            <person name="Yamada K."/>
            <person name="Minabe Y."/>
            <person name="Nakamura K."/>
            <person name="Mori N."/>
            <person name="Fujii K."/>
            <person name="Nanko S."/>
            <person name="Yoshikawa T."/>
        </authorList>
    </citation>
    <scope>TISSUE SPECIFICITY</scope>
</reference>
<reference key="13">
    <citation type="journal article" date="2006" name="Biol. Psychiatry">
        <title>A polymorphism in the PDLIM5 gene associated with gene expression and schizophrenia.</title>
        <authorList>
            <person name="Horiuchi Y."/>
            <person name="Arai M."/>
            <person name="Niizato K."/>
            <person name="Iritani S."/>
            <person name="Noguchi E."/>
            <person name="Ohtsuki T."/>
            <person name="Koga M."/>
            <person name="Kato T."/>
            <person name="Itokawa M."/>
            <person name="Arinami T."/>
        </authorList>
    </citation>
    <scope>TISSUE SPECIFICITY</scope>
</reference>
<reference key="14">
    <citation type="journal article" date="2006" name="Cell">
        <title>Global, in vivo, and site-specific phosphorylation dynamics in signaling networks.</title>
        <authorList>
            <person name="Olsen J.V."/>
            <person name="Blagoev B."/>
            <person name="Gnad F."/>
            <person name="Macek B."/>
            <person name="Kumar C."/>
            <person name="Mortensen P."/>
            <person name="Mann M."/>
        </authorList>
    </citation>
    <scope>PHOSPHORYLATION [LARGE SCALE ANALYSIS] AT SER-309 AND SER-313</scope>
    <scope>IDENTIFICATION BY MASS SPECTROMETRY [LARGE SCALE ANALYSIS]</scope>
    <source>
        <tissue>Cervix carcinoma</tissue>
    </source>
</reference>
<reference key="15">
    <citation type="journal article" date="2007" name="J. Proteome Res.">
        <title>Improved titanium dioxide enrichment of phosphopeptides from HeLa cells and high confident phosphopeptide identification by cross-validation of MS/MS and MS/MS/MS spectra.</title>
        <authorList>
            <person name="Yu L.R."/>
            <person name="Zhu Z."/>
            <person name="Chan K.C."/>
            <person name="Issaq H.J."/>
            <person name="Dimitrov D.S."/>
            <person name="Veenstra T.D."/>
        </authorList>
    </citation>
    <scope>IDENTIFICATION BY MASS SPECTROMETRY [LARGE SCALE ANALYSIS]</scope>
    <source>
        <tissue>Cervix carcinoma</tissue>
    </source>
</reference>
<reference key="16">
    <citation type="journal article" date="2008" name="Proc. Natl. Acad. Sci. U.S.A.">
        <title>A quantitative atlas of mitotic phosphorylation.</title>
        <authorList>
            <person name="Dephoure N."/>
            <person name="Zhou C."/>
            <person name="Villen J."/>
            <person name="Beausoleil S.A."/>
            <person name="Bakalarski C.E."/>
            <person name="Elledge S.J."/>
            <person name="Gygi S.P."/>
        </authorList>
    </citation>
    <scope>PHOSPHORYLATION [LARGE SCALE ANALYSIS] AT SER-111; SER-137; SER-309 AND SER-313</scope>
    <scope>IDENTIFICATION BY MASS SPECTROMETRY [LARGE SCALE ANALYSIS]</scope>
    <source>
        <tissue>Cervix carcinoma</tissue>
    </source>
</reference>
<reference key="17">
    <citation type="journal article" date="2010" name="Sci. Signal.">
        <title>Quantitative phosphoproteomics reveals widespread full phosphorylation site occupancy during mitosis.</title>
        <authorList>
            <person name="Olsen J.V."/>
            <person name="Vermeulen M."/>
            <person name="Santamaria A."/>
            <person name="Kumar C."/>
            <person name="Miller M.L."/>
            <person name="Jensen L.J."/>
            <person name="Gnad F."/>
            <person name="Cox J."/>
            <person name="Jensen T.S."/>
            <person name="Nigg E.A."/>
            <person name="Brunak S."/>
            <person name="Mann M."/>
        </authorList>
    </citation>
    <scope>PHOSPHORYLATION [LARGE SCALE ANALYSIS] AT SER-111; SER-137; SER-309 AND SER-313</scope>
    <scope>IDENTIFICATION BY MASS SPECTROMETRY [LARGE SCALE ANALYSIS]</scope>
    <source>
        <tissue>Cervix carcinoma</tissue>
    </source>
</reference>
<reference key="18">
    <citation type="journal article" date="2011" name="Sci. Signal.">
        <title>System-wide temporal characterization of the proteome and phosphoproteome of human embryonic stem cell differentiation.</title>
        <authorList>
            <person name="Rigbolt K.T."/>
            <person name="Prokhorova T.A."/>
            <person name="Akimov V."/>
            <person name="Henningsen J."/>
            <person name="Johansen P.T."/>
            <person name="Kratchmarova I."/>
            <person name="Kassem M."/>
            <person name="Mann M."/>
            <person name="Olsen J.V."/>
            <person name="Blagoev B."/>
        </authorList>
    </citation>
    <scope>PHOSPHORYLATION [LARGE SCALE ANALYSIS] AT SER-309</scope>
    <scope>IDENTIFICATION BY MASS SPECTROMETRY [LARGE SCALE ANALYSIS]</scope>
</reference>
<reference key="19">
    <citation type="journal article" date="2012" name="Mol. Cell. Proteomics">
        <title>Comparative large-scale characterisation of plant vs. mammal proteins reveals similar and idiosyncratic N-alpha acetylation features.</title>
        <authorList>
            <person name="Bienvenut W.V."/>
            <person name="Sumpton D."/>
            <person name="Martinez A."/>
            <person name="Lilla S."/>
            <person name="Espagne C."/>
            <person name="Meinnel T."/>
            <person name="Giglione C."/>
        </authorList>
    </citation>
    <scope>ACETYLATION [LARGE SCALE ANALYSIS] AT SER-2</scope>
    <scope>CLEAVAGE OF INITIATOR METHIONINE [LARGE SCALE ANALYSIS]</scope>
    <scope>IDENTIFICATION BY MASS SPECTROMETRY [LARGE SCALE ANALYSIS]</scope>
</reference>
<reference key="20">
    <citation type="journal article" date="2012" name="Proc. Natl. Acad. Sci. U.S.A.">
        <title>N-terminal acetylome analyses and functional insights of the N-terminal acetyltransferase NatB.</title>
        <authorList>
            <person name="Van Damme P."/>
            <person name="Lasa M."/>
            <person name="Polevoda B."/>
            <person name="Gazquez C."/>
            <person name="Elosegui-Artola A."/>
            <person name="Kim D.S."/>
            <person name="De Juan-Pardo E."/>
            <person name="Demeyer K."/>
            <person name="Hole K."/>
            <person name="Larrea E."/>
            <person name="Timmerman E."/>
            <person name="Prieto J."/>
            <person name="Arnesen T."/>
            <person name="Sherman F."/>
            <person name="Gevaert K."/>
            <person name="Aldabe R."/>
        </authorList>
    </citation>
    <scope>ACETYLATION [LARGE SCALE ANALYSIS] AT SER-2</scope>
    <scope>CLEAVAGE OF INITIATOR METHIONINE [LARGE SCALE ANALYSIS]</scope>
    <scope>IDENTIFICATION BY MASS SPECTROMETRY [LARGE SCALE ANALYSIS]</scope>
</reference>
<reference key="21">
    <citation type="journal article" date="2013" name="J. Proteome Res.">
        <title>Toward a comprehensive characterization of a human cancer cell phosphoproteome.</title>
        <authorList>
            <person name="Zhou H."/>
            <person name="Di Palma S."/>
            <person name="Preisinger C."/>
            <person name="Peng M."/>
            <person name="Polat A.N."/>
            <person name="Heck A.J."/>
            <person name="Mohammed S."/>
        </authorList>
    </citation>
    <scope>PHOSPHORYLATION [LARGE SCALE ANALYSIS] AT SER-111; SER-134; SER-137; SER-260; SER-309; SER-313; SER-360 AND SER-362</scope>
    <scope>IDENTIFICATION BY MASS SPECTROMETRY [LARGE SCALE ANALYSIS]</scope>
    <source>
        <tissue>Cervix carcinoma</tissue>
        <tissue>Erythroleukemia</tissue>
    </source>
</reference>
<reference key="22">
    <citation type="journal article" date="2014" name="J. Proteomics">
        <title>An enzyme assisted RP-RPLC approach for in-depth analysis of human liver phosphoproteome.</title>
        <authorList>
            <person name="Bian Y."/>
            <person name="Song C."/>
            <person name="Cheng K."/>
            <person name="Dong M."/>
            <person name="Wang F."/>
            <person name="Huang J."/>
            <person name="Sun D."/>
            <person name="Wang L."/>
            <person name="Ye M."/>
            <person name="Zou H."/>
        </authorList>
    </citation>
    <scope>PHOSPHORYLATION [LARGE SCALE ANALYSIS] AT SER-313 AND SER-360</scope>
    <scope>IDENTIFICATION BY MASS SPECTROMETRY [LARGE SCALE ANALYSIS]</scope>
    <source>
        <tissue>Liver</tissue>
    </source>
</reference>
<reference key="23">
    <citation type="journal article" date="2014" name="Proc. Natl. Acad. Sci. U.S.A.">
        <title>Mapping of SUMO sites and analysis of SUMOylation changes induced by external stimuli.</title>
        <authorList>
            <person name="Impens F."/>
            <person name="Radoshevich L."/>
            <person name="Cossart P."/>
            <person name="Ribet D."/>
        </authorList>
    </citation>
    <scope>IDENTIFICATION BY MASS SPECTROMETRY [LARGE SCALE ANALYSIS]</scope>
</reference>
<reference key="24">
    <citation type="journal article" date="2017" name="Nat. Struct. Mol. Biol.">
        <title>Site-specific mapping of the human SUMO proteome reveals co-modification with phosphorylation.</title>
        <authorList>
            <person name="Hendriks I.A."/>
            <person name="Lyon D."/>
            <person name="Young C."/>
            <person name="Jensen L.J."/>
            <person name="Vertegaal A.C."/>
            <person name="Nielsen M.L."/>
        </authorList>
    </citation>
    <scope>SUMOYLATION [LARGE SCALE ANALYSIS] AT LYS-89</scope>
    <scope>IDENTIFICATION BY MASS SPECTROMETRY [LARGE SCALE ANALYSIS]</scope>
</reference>
<reference key="25">
    <citation type="submission" date="2006-12" db="PDB data bank">
        <title>Solution structure of first LIM domain of enigma-like PDZ and LIM domains protein.</title>
        <authorList>
            <consortium name="RIKEN structural genomics initiative (RSGI)"/>
        </authorList>
    </citation>
    <scope>STRUCTURE BY NMR OF 400-476</scope>
</reference>
<reference key="26">
    <citation type="journal article" date="2010" name="Protein Sci.">
        <title>Unusual binding interactions in PDZ domain crystal structures help explain binding mechanisms.</title>
        <authorList>
            <person name="Elkins J.M."/>
            <person name="Gileadi C."/>
            <person name="Shrestha L."/>
            <person name="Phillips C."/>
            <person name="Wang J."/>
            <person name="Muniz J.R."/>
            <person name="Doyle D.A."/>
        </authorList>
    </citation>
    <scope>X-RAY CRYSTALLOGRAPHY (1.5 ANGSTROMS) OF 1-83</scope>
</reference>
<reference key="27">
    <citation type="journal article" date="2011" name="BMC Syst. Biol.">
        <title>Initial characterization of the human central proteome.</title>
        <authorList>
            <person name="Burkard T.R."/>
            <person name="Planyavsky M."/>
            <person name="Kaupe I."/>
            <person name="Breitwieser F.P."/>
            <person name="Buerckstuemmer T."/>
            <person name="Bennett K.L."/>
            <person name="Superti-Furga G."/>
            <person name="Colinge J."/>
        </authorList>
    </citation>
    <scope>VARIANT [LARGE SCALE ANALYSIS] ASN-492</scope>
    <scope>IDENTIFICATION BY MASS SPECTROMETRY [LARGE SCALE ANALYSIS]</scope>
</reference>
<dbReference type="EMBL" id="AF061258">
    <property type="protein sequence ID" value="AAC15767.1"/>
    <property type="molecule type" value="mRNA"/>
</dbReference>
<dbReference type="EMBL" id="AY345240">
    <property type="protein sequence ID" value="AAR09142.1"/>
    <property type="molecule type" value="mRNA"/>
</dbReference>
<dbReference type="EMBL" id="AY598328">
    <property type="protein sequence ID" value="AAT06739.1"/>
    <property type="molecule type" value="mRNA"/>
</dbReference>
<dbReference type="EMBL" id="BT007328">
    <property type="protein sequence ID" value="AAP35992.1"/>
    <property type="molecule type" value="mRNA"/>
</dbReference>
<dbReference type="EMBL" id="AK291624">
    <property type="protein sequence ID" value="BAF84313.1"/>
    <property type="molecule type" value="mRNA"/>
</dbReference>
<dbReference type="EMBL" id="AK291898">
    <property type="protein sequence ID" value="BAF84587.1"/>
    <property type="molecule type" value="mRNA"/>
</dbReference>
<dbReference type="EMBL" id="CR610626">
    <property type="status" value="NOT_ANNOTATED_CDS"/>
    <property type="molecule type" value="mRNA"/>
</dbReference>
<dbReference type="EMBL" id="AL833438">
    <property type="status" value="NOT_ANNOTATED_CDS"/>
    <property type="molecule type" value="mRNA"/>
</dbReference>
<dbReference type="EMBL" id="AC093778">
    <property type="status" value="NOT_ANNOTATED_CDS"/>
    <property type="molecule type" value="Genomic_DNA"/>
</dbReference>
<dbReference type="EMBL" id="AC108067">
    <property type="status" value="NOT_ANNOTATED_CDS"/>
    <property type="molecule type" value="Genomic_DNA"/>
</dbReference>
<dbReference type="EMBL" id="AC109925">
    <property type="status" value="NOT_ANNOTATED_CDS"/>
    <property type="molecule type" value="Genomic_DNA"/>
</dbReference>
<dbReference type="EMBL" id="CH471057">
    <property type="protein sequence ID" value="EAX06054.1"/>
    <property type="molecule type" value="Genomic_DNA"/>
</dbReference>
<dbReference type="EMBL" id="BC017902">
    <property type="protein sequence ID" value="AAH17902.1"/>
    <property type="molecule type" value="mRNA"/>
</dbReference>
<dbReference type="EMBL" id="BC008741">
    <property type="protein sequence ID" value="AAH08741.1"/>
    <property type="molecule type" value="mRNA"/>
</dbReference>
<dbReference type="CCDS" id="CCDS3641.1">
    <molecule id="Q96HC4-1"/>
</dbReference>
<dbReference type="CCDS" id="CCDS47102.1">
    <molecule id="Q96HC4-4"/>
</dbReference>
<dbReference type="CCDS" id="CCDS47103.1">
    <molecule id="Q96HC4-2"/>
</dbReference>
<dbReference type="CCDS" id="CCDS47104.1">
    <molecule id="Q96HC4-3"/>
</dbReference>
<dbReference type="CCDS" id="CCDS58915.1">
    <molecule id="Q96HC4-5"/>
</dbReference>
<dbReference type="CCDS" id="CCDS58916.1">
    <molecule id="Q96HC4-6"/>
</dbReference>
<dbReference type="CCDS" id="CCDS58917.1">
    <molecule id="Q96HC4-7"/>
</dbReference>
<dbReference type="RefSeq" id="NP_001011513.4">
    <molecule id="Q96HC4-4"/>
    <property type="nucleotide sequence ID" value="NM_001011513.4"/>
</dbReference>
<dbReference type="RefSeq" id="NP_001011515.1">
    <molecule id="Q96HC4-2"/>
    <property type="nucleotide sequence ID" value="NM_001011515.3"/>
</dbReference>
<dbReference type="RefSeq" id="NP_001011516.1">
    <molecule id="Q96HC4-3"/>
    <property type="nucleotide sequence ID" value="NM_001011516.3"/>
</dbReference>
<dbReference type="RefSeq" id="NP_001243355.2">
    <molecule id="Q96HC4-6"/>
    <property type="nucleotide sequence ID" value="NM_001256426.2"/>
</dbReference>
<dbReference type="RefSeq" id="NP_001243356.2">
    <molecule id="Q96HC4-7"/>
    <property type="nucleotide sequence ID" value="NM_001256427.2"/>
</dbReference>
<dbReference type="RefSeq" id="NP_001243358.1">
    <molecule id="Q96HC4-5"/>
    <property type="nucleotide sequence ID" value="NM_001256429.2"/>
</dbReference>
<dbReference type="RefSeq" id="NP_006448.5">
    <molecule id="Q96HC4-1"/>
    <property type="nucleotide sequence ID" value="NM_006457.5"/>
</dbReference>
<dbReference type="PDB" id="2DAR">
    <property type="method" value="NMR"/>
    <property type="chains" value="A=400-476"/>
</dbReference>
<dbReference type="PDB" id="2UZC">
    <property type="method" value="X-ray"/>
    <property type="resolution" value="1.50 A"/>
    <property type="chains" value="A/B/C/D/E=1-83"/>
</dbReference>
<dbReference type="PDBsum" id="2DAR"/>
<dbReference type="PDBsum" id="2UZC"/>
<dbReference type="SMR" id="Q96HC4"/>
<dbReference type="BioGRID" id="115857">
    <property type="interactions" value="207"/>
</dbReference>
<dbReference type="CORUM" id="Q96HC4"/>
<dbReference type="DIP" id="DIP-34898N"/>
<dbReference type="FunCoup" id="Q96HC4">
    <property type="interactions" value="592"/>
</dbReference>
<dbReference type="IntAct" id="Q96HC4">
    <property type="interactions" value="79"/>
</dbReference>
<dbReference type="MINT" id="Q96HC4"/>
<dbReference type="GlyCosmos" id="Q96HC4">
    <property type="glycosylation" value="18 sites, 2 glycans"/>
</dbReference>
<dbReference type="GlyGen" id="Q96HC4">
    <property type="glycosylation" value="30 sites, 1 N-linked glycan (1 site), 3 O-linked glycans (28 sites)"/>
</dbReference>
<dbReference type="iPTMnet" id="Q96HC4"/>
<dbReference type="MetOSite" id="Q96HC4"/>
<dbReference type="PhosphoSitePlus" id="Q96HC4"/>
<dbReference type="SwissPalm" id="Q96HC4"/>
<dbReference type="BioMuta" id="PDLIM5"/>
<dbReference type="DMDM" id="317373590"/>
<dbReference type="jPOST" id="Q96HC4"/>
<dbReference type="MassIVE" id="Q96HC4"/>
<dbReference type="PeptideAtlas" id="Q96HC4"/>
<dbReference type="ProteomicsDB" id="13553"/>
<dbReference type="ProteomicsDB" id="19211"/>
<dbReference type="ProteomicsDB" id="62593"/>
<dbReference type="ProteomicsDB" id="76730">
    <molecule id="Q96HC4-1"/>
</dbReference>
<dbReference type="ProteomicsDB" id="76731">
    <molecule id="Q96HC4-2"/>
</dbReference>
<dbReference type="ProteomicsDB" id="76732">
    <molecule id="Q96HC4-3"/>
</dbReference>
<dbReference type="ProteomicsDB" id="76733">
    <molecule id="Q96HC4-4"/>
</dbReference>
<dbReference type="Pumba" id="Q96HC4"/>
<dbReference type="Antibodypedia" id="4614">
    <property type="antibodies" value="410 antibodies from 30 providers"/>
</dbReference>
<dbReference type="DNASU" id="10611"/>
<dbReference type="Ensembl" id="ENST00000317968.9">
    <molecule id="Q96HC4-1"/>
    <property type="protein sequence ID" value="ENSP00000321746.4"/>
    <property type="gene ID" value="ENSG00000163110.15"/>
</dbReference>
<dbReference type="Ensembl" id="ENST00000318007.9">
    <molecule id="Q96HC4-3"/>
    <property type="protein sequence ID" value="ENSP00000322021.5"/>
    <property type="gene ID" value="ENSG00000163110.15"/>
</dbReference>
<dbReference type="Ensembl" id="ENST00000359265.8">
    <molecule id="Q96HC4-5"/>
    <property type="protein sequence ID" value="ENSP00000352210.4"/>
    <property type="gene ID" value="ENSG00000163110.15"/>
</dbReference>
<dbReference type="Ensembl" id="ENST00000380180.7">
    <molecule id="Q96HC4-2"/>
    <property type="protein sequence ID" value="ENSP00000369527.3"/>
    <property type="gene ID" value="ENSG00000163110.15"/>
</dbReference>
<dbReference type="Ensembl" id="ENST00000503974.5">
    <molecule id="Q96HC4-7"/>
    <property type="protein sequence ID" value="ENSP00000424297.1"/>
    <property type="gene ID" value="ENSG00000163110.15"/>
</dbReference>
<dbReference type="Ensembl" id="ENST00000508216.5">
    <molecule id="Q96HC4-2"/>
    <property type="protein sequence ID" value="ENSP00000426804.1"/>
    <property type="gene ID" value="ENSG00000163110.15"/>
</dbReference>
<dbReference type="Ensembl" id="ENST00000514743.5">
    <molecule id="Q96HC4-6"/>
    <property type="protein sequence ID" value="ENSP00000424360.1"/>
    <property type="gene ID" value="ENSG00000163110.15"/>
</dbReference>
<dbReference type="Ensembl" id="ENST00000542407.5">
    <molecule id="Q96HC4-4"/>
    <property type="protein sequence ID" value="ENSP00000442187.2"/>
    <property type="gene ID" value="ENSG00000163110.15"/>
</dbReference>
<dbReference type="Ensembl" id="ENST00000615540.4">
    <molecule id="Q96HC4-6"/>
    <property type="protein sequence ID" value="ENSP00000480359.1"/>
    <property type="gene ID" value="ENSG00000163110.15"/>
</dbReference>
<dbReference type="GeneID" id="10611"/>
<dbReference type="KEGG" id="hsa:10611"/>
<dbReference type="MANE-Select" id="ENST00000317968.9">
    <property type="protein sequence ID" value="ENSP00000321746.4"/>
    <property type="RefSeq nucleotide sequence ID" value="NM_006457.5"/>
    <property type="RefSeq protein sequence ID" value="NP_006448.5"/>
</dbReference>
<dbReference type="UCSC" id="uc003htf.5">
    <molecule id="Q96HC4-1"/>
    <property type="organism name" value="human"/>
</dbReference>
<dbReference type="AGR" id="HGNC:17468"/>
<dbReference type="CTD" id="10611"/>
<dbReference type="DisGeNET" id="10611"/>
<dbReference type="GeneCards" id="PDLIM5"/>
<dbReference type="HGNC" id="HGNC:17468">
    <property type="gene designation" value="PDLIM5"/>
</dbReference>
<dbReference type="HPA" id="ENSG00000163110">
    <property type="expression patterns" value="Group enriched (heart muscle, skeletal muscle, tongue)"/>
</dbReference>
<dbReference type="MIM" id="605904">
    <property type="type" value="gene"/>
</dbReference>
<dbReference type="neXtProt" id="NX_Q96HC4"/>
<dbReference type="OpenTargets" id="ENSG00000163110"/>
<dbReference type="PharmGKB" id="PA134917248"/>
<dbReference type="VEuPathDB" id="HostDB:ENSG00000163110"/>
<dbReference type="eggNOG" id="KOG1703">
    <property type="taxonomic scope" value="Eukaryota"/>
</dbReference>
<dbReference type="GeneTree" id="ENSGT00940000155292"/>
<dbReference type="HOGENOM" id="CLU_038114_3_0_1"/>
<dbReference type="InParanoid" id="Q96HC4"/>
<dbReference type="OMA" id="ITGTEHX"/>
<dbReference type="OrthoDB" id="5911912at2759"/>
<dbReference type="PAN-GO" id="Q96HC4">
    <property type="GO annotations" value="9 GO annotations based on evolutionary models"/>
</dbReference>
<dbReference type="PhylomeDB" id="Q96HC4"/>
<dbReference type="TreeFam" id="TF106408"/>
<dbReference type="PathwayCommons" id="Q96HC4"/>
<dbReference type="Reactome" id="R-HSA-6794361">
    <property type="pathway name" value="Neurexins and neuroligins"/>
</dbReference>
<dbReference type="SignaLink" id="Q96HC4"/>
<dbReference type="BioGRID-ORCS" id="10611">
    <property type="hits" value="17 hits in 1166 CRISPR screens"/>
</dbReference>
<dbReference type="CD-CODE" id="DEE660B4">
    <property type="entry name" value="Stress granule"/>
</dbReference>
<dbReference type="ChiTaRS" id="PDLIM5">
    <property type="organism name" value="human"/>
</dbReference>
<dbReference type="EvolutionaryTrace" id="Q96HC4"/>
<dbReference type="GeneWiki" id="PDLIM5"/>
<dbReference type="GenomeRNAi" id="10611"/>
<dbReference type="Pharos" id="Q96HC4">
    <property type="development level" value="Tbio"/>
</dbReference>
<dbReference type="PRO" id="PR:Q96HC4"/>
<dbReference type="Proteomes" id="UP000005640">
    <property type="component" value="Chromosome 4"/>
</dbReference>
<dbReference type="RNAct" id="Q96HC4">
    <property type="molecule type" value="protein"/>
</dbReference>
<dbReference type="Bgee" id="ENSG00000163110">
    <property type="expression patterns" value="Expressed in skeletal muscle tissue of biceps brachii and 209 other cell types or tissues"/>
</dbReference>
<dbReference type="ExpressionAtlas" id="Q96HC4">
    <property type="expression patterns" value="baseline and differential"/>
</dbReference>
<dbReference type="GO" id="GO:0015629">
    <property type="term" value="C:actin cytoskeleton"/>
    <property type="evidence" value="ECO:0000314"/>
    <property type="project" value="LIFEdb"/>
</dbReference>
<dbReference type="GO" id="GO:0005912">
    <property type="term" value="C:adherens junction"/>
    <property type="evidence" value="ECO:0007005"/>
    <property type="project" value="BHF-UCL"/>
</dbReference>
<dbReference type="GO" id="GO:0042995">
    <property type="term" value="C:cell projection"/>
    <property type="evidence" value="ECO:0007669"/>
    <property type="project" value="UniProtKB-KW"/>
</dbReference>
<dbReference type="GO" id="GO:0005829">
    <property type="term" value="C:cytosol"/>
    <property type="evidence" value="ECO:0000250"/>
    <property type="project" value="UniProtKB"/>
</dbReference>
<dbReference type="GO" id="GO:0031941">
    <property type="term" value="C:filamentous actin"/>
    <property type="evidence" value="ECO:0000318"/>
    <property type="project" value="GO_Central"/>
</dbReference>
<dbReference type="GO" id="GO:0016020">
    <property type="term" value="C:membrane"/>
    <property type="evidence" value="ECO:0000250"/>
    <property type="project" value="UniProtKB"/>
</dbReference>
<dbReference type="GO" id="GO:0014069">
    <property type="term" value="C:postsynaptic density"/>
    <property type="evidence" value="ECO:0000250"/>
    <property type="project" value="UniProtKB"/>
</dbReference>
<dbReference type="GO" id="GO:0098793">
    <property type="term" value="C:presynapse"/>
    <property type="evidence" value="ECO:0007669"/>
    <property type="project" value="UniProtKB-SubCell"/>
</dbReference>
<dbReference type="GO" id="GO:0001725">
    <property type="term" value="C:stress fiber"/>
    <property type="evidence" value="ECO:0000318"/>
    <property type="project" value="GO_Central"/>
</dbReference>
<dbReference type="GO" id="GO:0030018">
    <property type="term" value="C:Z disc"/>
    <property type="evidence" value="ECO:0000318"/>
    <property type="project" value="GO_Central"/>
</dbReference>
<dbReference type="GO" id="GO:0003779">
    <property type="term" value="F:actin binding"/>
    <property type="evidence" value="ECO:0000250"/>
    <property type="project" value="UniProtKB"/>
</dbReference>
<dbReference type="GO" id="GO:0042805">
    <property type="term" value="F:actinin binding"/>
    <property type="evidence" value="ECO:0000250"/>
    <property type="project" value="UniProtKB"/>
</dbReference>
<dbReference type="GO" id="GO:0098641">
    <property type="term" value="F:cadherin binding involved in cell-cell adhesion"/>
    <property type="evidence" value="ECO:0007005"/>
    <property type="project" value="BHF-UCL"/>
</dbReference>
<dbReference type="GO" id="GO:0046872">
    <property type="term" value="F:metal ion binding"/>
    <property type="evidence" value="ECO:0007669"/>
    <property type="project" value="UniProtKB-KW"/>
</dbReference>
<dbReference type="GO" id="GO:0051371">
    <property type="term" value="F:muscle alpha-actinin binding"/>
    <property type="evidence" value="ECO:0000318"/>
    <property type="project" value="GO_Central"/>
</dbReference>
<dbReference type="GO" id="GO:0005080">
    <property type="term" value="F:protein kinase C binding"/>
    <property type="evidence" value="ECO:0000250"/>
    <property type="project" value="UniProtKB"/>
</dbReference>
<dbReference type="GO" id="GO:0030036">
    <property type="term" value="P:actin cytoskeleton organization"/>
    <property type="evidence" value="ECO:0000318"/>
    <property type="project" value="GO_Central"/>
</dbReference>
<dbReference type="GO" id="GO:0061049">
    <property type="term" value="P:cell growth involved in cardiac muscle cell development"/>
    <property type="evidence" value="ECO:0000250"/>
    <property type="project" value="BHF-UCL"/>
</dbReference>
<dbReference type="GO" id="GO:0007507">
    <property type="term" value="P:heart development"/>
    <property type="evidence" value="ECO:0000318"/>
    <property type="project" value="GO_Central"/>
</dbReference>
<dbReference type="GO" id="GO:0061061">
    <property type="term" value="P:muscle structure development"/>
    <property type="evidence" value="ECO:0000318"/>
    <property type="project" value="GO_Central"/>
</dbReference>
<dbReference type="GO" id="GO:0061001">
    <property type="term" value="P:regulation of dendritic spine morphogenesis"/>
    <property type="evidence" value="ECO:0000250"/>
    <property type="project" value="UniProtKB"/>
</dbReference>
<dbReference type="GO" id="GO:0051963">
    <property type="term" value="P:regulation of synapse assembly"/>
    <property type="evidence" value="ECO:0000250"/>
    <property type="project" value="UniProtKB"/>
</dbReference>
<dbReference type="CDD" id="cd09453">
    <property type="entry name" value="LIM1_ENH"/>
    <property type="match status" value="1"/>
</dbReference>
<dbReference type="CDD" id="cd09459">
    <property type="entry name" value="LIM3_ENH"/>
    <property type="match status" value="1"/>
</dbReference>
<dbReference type="CDD" id="cd06753">
    <property type="entry name" value="PDZ_PDLIM-like"/>
    <property type="match status" value="1"/>
</dbReference>
<dbReference type="FunFam" id="2.30.42.10:FF:000019">
    <property type="entry name" value="LIM domain binding 3 isoform 1"/>
    <property type="match status" value="1"/>
</dbReference>
<dbReference type="FunFam" id="2.10.110.10:FF:000010">
    <property type="entry name" value="PDZ and LIM domain protein 5"/>
    <property type="match status" value="1"/>
</dbReference>
<dbReference type="FunFam" id="2.10.110.10:FF:000014">
    <property type="entry name" value="PDZ and LIM domain protein 5"/>
    <property type="match status" value="1"/>
</dbReference>
<dbReference type="FunFam" id="2.10.110.10:FF:000020">
    <property type="entry name" value="PDZ and LIM domain protein 5"/>
    <property type="match status" value="1"/>
</dbReference>
<dbReference type="Gene3D" id="2.30.42.10">
    <property type="match status" value="1"/>
</dbReference>
<dbReference type="Gene3D" id="2.10.110.10">
    <property type="entry name" value="Cysteine Rich Protein"/>
    <property type="match status" value="3"/>
</dbReference>
<dbReference type="InterPro" id="IPR001478">
    <property type="entry name" value="PDZ"/>
</dbReference>
<dbReference type="InterPro" id="IPR050604">
    <property type="entry name" value="PDZ-LIM_domain"/>
</dbReference>
<dbReference type="InterPro" id="IPR036034">
    <property type="entry name" value="PDZ_sf"/>
</dbReference>
<dbReference type="InterPro" id="IPR001781">
    <property type="entry name" value="Znf_LIM"/>
</dbReference>
<dbReference type="PANTHER" id="PTHR24214:SF32">
    <property type="entry name" value="PDZ AND LIM DOMAIN PROTEIN 5"/>
    <property type="match status" value="1"/>
</dbReference>
<dbReference type="PANTHER" id="PTHR24214">
    <property type="entry name" value="PDZ AND LIM DOMAIN PROTEIN ZASP"/>
    <property type="match status" value="1"/>
</dbReference>
<dbReference type="Pfam" id="PF00412">
    <property type="entry name" value="LIM"/>
    <property type="match status" value="3"/>
</dbReference>
<dbReference type="Pfam" id="PF00595">
    <property type="entry name" value="PDZ"/>
    <property type="match status" value="1"/>
</dbReference>
<dbReference type="SMART" id="SM00132">
    <property type="entry name" value="LIM"/>
    <property type="match status" value="3"/>
</dbReference>
<dbReference type="SMART" id="SM00228">
    <property type="entry name" value="PDZ"/>
    <property type="match status" value="1"/>
</dbReference>
<dbReference type="SUPFAM" id="SSF57716">
    <property type="entry name" value="Glucocorticoid receptor-like (DNA-binding domain)"/>
    <property type="match status" value="3"/>
</dbReference>
<dbReference type="SUPFAM" id="SSF50156">
    <property type="entry name" value="PDZ domain-like"/>
    <property type="match status" value="1"/>
</dbReference>
<dbReference type="PROSITE" id="PS00478">
    <property type="entry name" value="LIM_DOMAIN_1"/>
    <property type="match status" value="2"/>
</dbReference>
<dbReference type="PROSITE" id="PS50023">
    <property type="entry name" value="LIM_DOMAIN_2"/>
    <property type="match status" value="3"/>
</dbReference>
<dbReference type="PROSITE" id="PS50106">
    <property type="entry name" value="PDZ"/>
    <property type="match status" value="1"/>
</dbReference>
<comment type="function">
    <text evidence="1">May play an important role in the heart development by scaffolding PKC to the Z-disk region. May play a role in the regulation of cardiomyocyte expansion. Isoforms lacking the LIM domains may negatively modulate the scaffolding activity of isoform 1. Overexpression promotes the development of heart hypertrophy. Contributes to the regulation of dendritic spine morphogenesis in neurons. May be required to restrain postsynaptic growth of excitatory synapses. Isoform 1, but not isoform 2, expression favors spine thinning and elongation.</text>
</comment>
<comment type="subunit">
    <text evidence="1">Interacts with various PKC isoforms through the LIM domains. Interacts with actin and alpha-actinin through the PDZ domain. Interacts (via LIM domains) with SIPA1L1/SPAR; this interaction may occur preferentially with isoform 1.</text>
</comment>
<comment type="interaction">
    <interactant intactId="EBI-751267">
        <id>Q96HC4</id>
    </interactant>
    <interactant intactId="EBI-930964">
        <id>P54253</id>
        <label>ATXN1</label>
    </interactant>
    <organismsDiffer>false</organismsDiffer>
    <experiments>6</experiments>
</comment>
<comment type="interaction">
    <interactant intactId="EBI-751267">
        <id>Q96HC4</id>
    </interactant>
    <interactant intactId="EBI-10171416">
        <id>Q96JN2-2</id>
        <label>CCDC136</label>
    </interactant>
    <organismsDiffer>false</organismsDiffer>
    <experiments>3</experiments>
</comment>
<comment type="interaction">
    <interactant intactId="EBI-751267">
        <id>Q96HC4</id>
    </interactant>
    <interactant intactId="EBI-945751">
        <id>P38432</id>
        <label>COIL</label>
    </interactant>
    <organismsDiffer>false</organismsDiffer>
    <experiments>4</experiments>
</comment>
<comment type="interaction">
    <interactant intactId="EBI-751267">
        <id>Q96HC4</id>
    </interactant>
    <interactant intactId="EBI-744302">
        <id>P14136</id>
        <label>GFAP</label>
    </interactant>
    <organismsDiffer>false</organismsDiffer>
    <experiments>3</experiments>
</comment>
<comment type="interaction">
    <interactant intactId="EBI-751267">
        <id>Q96HC4</id>
    </interactant>
    <interactant intactId="EBI-466029">
        <id>P42858</id>
        <label>HTT</label>
    </interactant>
    <organismsDiffer>false</organismsDiffer>
    <experiments>9</experiments>
</comment>
<comment type="interaction">
    <interactant intactId="EBI-751267">
        <id>Q96HC4</id>
    </interactant>
    <interactant intactId="EBI-713450">
        <id>Q02363</id>
        <label>ID2</label>
    </interactant>
    <organismsDiffer>false</organismsDiffer>
    <experiments>5</experiments>
</comment>
<comment type="interaction">
    <interactant intactId="EBI-751267">
        <id>Q96HC4</id>
    </interactant>
    <interactant intactId="EBI-1055254">
        <id>Q8WXH2</id>
        <label>JPH3</label>
    </interactant>
    <organismsDiffer>false</organismsDiffer>
    <experiments>3</experiments>
</comment>
<comment type="interaction">
    <interactant intactId="EBI-751267">
        <id>Q96HC4</id>
    </interactant>
    <interactant intactId="EBI-10171697">
        <id>Q6A162</id>
        <label>KRT40</label>
    </interactant>
    <organismsDiffer>false</organismsDiffer>
    <experiments>3</experiments>
</comment>
<comment type="interaction">
    <interactant intactId="EBI-751267">
        <id>Q96HC4</id>
    </interactant>
    <interactant intactId="EBI-10172290">
        <id>P60409</id>
        <label>KRTAP10-7</label>
    </interactant>
    <organismsDiffer>false</organismsDiffer>
    <experiments>3</experiments>
</comment>
<comment type="interaction">
    <interactant intactId="EBI-751267">
        <id>Q96HC4</id>
    </interactant>
    <interactant intactId="EBI-444225">
        <id>Q15942</id>
        <label>ZYX</label>
    </interactant>
    <organismsDiffer>false</organismsDiffer>
    <experiments>3</experiments>
</comment>
<comment type="interaction">
    <interactant intactId="EBI-25913059">
        <id>Q96HC4-3</id>
    </interactant>
    <interactant intactId="EBI-618189">
        <id>Q06547-2</id>
        <label>GABPB1</label>
    </interactant>
    <organismsDiffer>false</organismsDiffer>
    <experiments>3</experiments>
</comment>
<comment type="interaction">
    <interactant intactId="EBI-25913059">
        <id>Q96HC4-3</id>
    </interactant>
    <interactant intactId="EBI-9088619">
        <id>Q06547-3</id>
        <label>GABPB1</label>
    </interactant>
    <organismsDiffer>false</organismsDiffer>
    <experiments>3</experiments>
</comment>
<comment type="interaction">
    <interactant intactId="EBI-25913059">
        <id>Q96HC4-3</id>
    </interactant>
    <interactant intactId="EBI-2626001">
        <id>Q9NWZ8</id>
        <label>GEMIN8</label>
    </interactant>
    <organismsDiffer>false</organismsDiffer>
    <experiments>3</experiments>
</comment>
<comment type="interaction">
    <interactant intactId="EBI-25913059">
        <id>Q96HC4-3</id>
    </interactant>
    <interactant intactId="EBI-4314702">
        <id>Q03403</id>
        <label>TFF2</label>
    </interactant>
    <organismsDiffer>false</organismsDiffer>
    <experiments>3</experiments>
</comment>
<comment type="subcellular location">
    <subcellularLocation>
        <location evidence="1">Postsynaptic density</location>
    </subcellularLocation>
    <subcellularLocation>
        <location evidence="1">Presynapse</location>
    </subcellularLocation>
    <subcellularLocation>
        <location evidence="1">Postsynapse</location>
    </subcellularLocation>
    <subcellularLocation>
        <location evidence="1">Cytoplasm</location>
        <location evidence="1">Cytosol</location>
    </subcellularLocation>
    <text evidence="1">Detected both at presynaptic and postsynaptic sites, exclusively at excitatory synapses, but not inhibitory synapses, in hippocampal neurons.</text>
</comment>
<comment type="alternative products">
    <event type="alternative splicing"/>
    <isoform>
        <id>Q96HC4-1</id>
        <name>1</name>
        <sequence type="displayed"/>
    </isoform>
    <isoform>
        <id>Q96HC4-2</id>
        <name>2</name>
        <sequence type="described" ref="VSP_039075 VSP_039076 VSP_039077 VSP_039078"/>
    </isoform>
    <isoform>
        <id>Q96HC4-3</id>
        <name>3</name>
        <sequence type="described" ref="VSP_039206 VSP_039207 VSP_039077 VSP_039078"/>
    </isoform>
    <isoform>
        <id>Q96HC4-4</id>
        <name>4</name>
        <sequence type="described" ref="VSP_039075"/>
    </isoform>
    <isoform>
        <id>Q96HC4-5</id>
        <name>5</name>
        <sequence type="described" ref="VSP_045098 VSP_045099"/>
    </isoform>
    <isoform>
        <id>Q96HC4-6</id>
        <name>6</name>
        <sequence type="described" ref="VSP_039075 VSP_039076 VSP_053796"/>
    </isoform>
    <isoform>
        <id>Q96HC4-7</id>
        <name>7</name>
        <sequence type="described" ref="VSP_039075 VSP_039076 VSP_053797"/>
    </isoform>
</comment>
<comment type="tissue specificity">
    <text evidence="6 10 11">Heart and skeletal muscle specific. Expression is commonly increased in the brain of patients with bipolar disorder, schizophrenia, and major depression.</text>
</comment>
<gene>
    <name evidence="17 22" type="primary">PDLIM5</name>
    <name evidence="15" type="synonym">ENH</name>
    <name type="ORF">L9</name>
</gene>
<sequence length="596" mass="63945">MSNYSVSLVGPAPWGFRLQGGKDFNMPLTISSLKDGGKAAQANVRIGDVVLSIDGINAQGMTHLEAQNKIKGCTGSLNMTLQRASAAPKPEPVPVQKGEPKEVVKPVPITSPAVSKVTSTNNMAYNKAPRPFGSVSSPKVTSIPSPSSAFTPAHATTSSHASPSPVAAVTPPLFAASGLHANANLSADQSPSALSAGKTAVNVPRQPTVTSVCSETSQELAEGQRRGSQGDSKQQNGPPRKHIVERYTEFYHVPTHSDASKKRLIEDTEDWRPRTGTTQSRSFRILAQITGTEHLKESEADNTKKANNSQEPSPQLASSVASTRSMPESLDSPTSGRPGVTSLTAAAAFKPVGSTGVIKSPSWQRPNQGVPSTGRISNSATYSGSVAPANSALGQTQPSDQDTLVQRAEHIPAGKRTPMCAHCNQVIRGPFLVALGKSWHPEEFNCAHCKNTMAYIGFVEEKGALYCELCYEKFFAPECGRCQRKILGEVISALKQTWHVSCFVCVACGKPIRNNVFHLEDGEPYCETDYYALFGTICHGCEFPIEAGDMFLEALGYTWHDTCFVCSVCCESLEGQTFFSKKDKPLCKKHAHSVNF</sequence>